<evidence type="ECO:0000255" key="1">
    <source>
        <dbReference type="HAMAP-Rule" id="MF_01588"/>
    </source>
</evidence>
<reference key="1">
    <citation type="journal article" date="2005" name="Nat. Biotechnol.">
        <title>The complete genome sequence of the meat-borne lactic acid bacterium Lactobacillus sakei 23K.</title>
        <authorList>
            <person name="Chaillou S."/>
            <person name="Champomier-Verges M.-C."/>
            <person name="Cornet M."/>
            <person name="Crutz-Le Coq A.-M."/>
            <person name="Dudez A.-M."/>
            <person name="Martin V."/>
            <person name="Beaufils S."/>
            <person name="Darbon-Rongere E."/>
            <person name="Bossy R."/>
            <person name="Loux V."/>
            <person name="Zagorec M."/>
        </authorList>
    </citation>
    <scope>NUCLEOTIDE SEQUENCE [LARGE SCALE GENOMIC DNA]</scope>
    <source>
        <strain>23K</strain>
    </source>
</reference>
<gene>
    <name evidence="1" type="primary">ligA</name>
    <name type="ordered locus">LCA_1551</name>
</gene>
<comment type="function">
    <text evidence="1">DNA ligase that catalyzes the formation of phosphodiester linkages between 5'-phosphoryl and 3'-hydroxyl groups in double-stranded DNA using NAD as a coenzyme and as the energy source for the reaction. It is essential for DNA replication and repair of damaged DNA.</text>
</comment>
<comment type="catalytic activity">
    <reaction evidence="1">
        <text>NAD(+) + (deoxyribonucleotide)n-3'-hydroxyl + 5'-phospho-(deoxyribonucleotide)m = (deoxyribonucleotide)n+m + AMP + beta-nicotinamide D-nucleotide.</text>
        <dbReference type="EC" id="6.5.1.2"/>
    </reaction>
</comment>
<comment type="cofactor">
    <cofactor evidence="1">
        <name>Mg(2+)</name>
        <dbReference type="ChEBI" id="CHEBI:18420"/>
    </cofactor>
    <cofactor evidence="1">
        <name>Mn(2+)</name>
        <dbReference type="ChEBI" id="CHEBI:29035"/>
    </cofactor>
</comment>
<comment type="similarity">
    <text evidence="1">Belongs to the NAD-dependent DNA ligase family. LigA subfamily.</text>
</comment>
<sequence length="677" mass="74135">MGLAKLVEDYTQSEAASLAQQLRDQLADYSQAYYTQDAPLVEDHVYDELYRDLEQLEAAFPVIVTNDSPTQKVGGQVLPGFTKVTHEIPMLSMGDVFSEAELAAFDQRLRKNTATEIEYNVELKIDGLAIDLIYEKGRFVRGATRGNGTIGEDITQNLKTIKAIPQKLTRPVSIEVRGECYMPKAAFADLNQKREAEGQAPFANPRNAAAGSLRQLDAKVAAARQLSAFIYTIVTFDDVQATTQSEALHVLAELGFNVNPTSVVCQNMAEVQAFIEQYQGTRNDLAYGIDGVVLKVNDLALQRQLGNTVKVPRWEIAYKFPPEEAETVIREIEWTVGRTGVVTPTAVMDPVQLAGTTVARASLHNADMLRDKDVRLLDTVLLHKAGDIIPEISQVVLAKRPSDSQAYGIPTTCPSCGHDLVHLDEEVALRCINPMCPAQMKEQLTHFASRNAMNIDGLGPRIITQLLEKELIHDVADLYRLTADDLAQLDKFKEKSINNLLNAIDASRQNSLERLLFGLGIRHVGAKAARLLAEHFQNLAALMASDQETIITVDTIGTIIADSLVTYFADSQVQTLMAELEAVGVNLTYTGVTKAQAATSDSYFNGKTVVLTGKLEQYTRGELKQLLEDNGAKVTGSVSKKTDALIAGQDAGSKLEKAQSLAIPIINEADLDNYLAQ</sequence>
<dbReference type="EC" id="6.5.1.2" evidence="1"/>
<dbReference type="EMBL" id="CR936503">
    <property type="protein sequence ID" value="CAI55858.1"/>
    <property type="molecule type" value="Genomic_DNA"/>
</dbReference>
<dbReference type="RefSeq" id="WP_011375246.1">
    <property type="nucleotide sequence ID" value="NC_007576.1"/>
</dbReference>
<dbReference type="SMR" id="Q38VC5"/>
<dbReference type="STRING" id="314315.LCA_1551"/>
<dbReference type="KEGG" id="lsa:LCA_1551"/>
<dbReference type="eggNOG" id="COG0272">
    <property type="taxonomic scope" value="Bacteria"/>
</dbReference>
<dbReference type="HOGENOM" id="CLU_007764_2_1_9"/>
<dbReference type="OrthoDB" id="9759736at2"/>
<dbReference type="Proteomes" id="UP000002707">
    <property type="component" value="Chromosome"/>
</dbReference>
<dbReference type="GO" id="GO:0005829">
    <property type="term" value="C:cytosol"/>
    <property type="evidence" value="ECO:0007669"/>
    <property type="project" value="TreeGrafter"/>
</dbReference>
<dbReference type="GO" id="GO:0003911">
    <property type="term" value="F:DNA ligase (NAD+) activity"/>
    <property type="evidence" value="ECO:0007669"/>
    <property type="project" value="UniProtKB-UniRule"/>
</dbReference>
<dbReference type="GO" id="GO:0046872">
    <property type="term" value="F:metal ion binding"/>
    <property type="evidence" value="ECO:0007669"/>
    <property type="project" value="UniProtKB-KW"/>
</dbReference>
<dbReference type="GO" id="GO:0006281">
    <property type="term" value="P:DNA repair"/>
    <property type="evidence" value="ECO:0007669"/>
    <property type="project" value="UniProtKB-KW"/>
</dbReference>
<dbReference type="GO" id="GO:0006260">
    <property type="term" value="P:DNA replication"/>
    <property type="evidence" value="ECO:0007669"/>
    <property type="project" value="UniProtKB-KW"/>
</dbReference>
<dbReference type="CDD" id="cd17748">
    <property type="entry name" value="BRCT_DNA_ligase_like"/>
    <property type="match status" value="1"/>
</dbReference>
<dbReference type="CDD" id="cd00114">
    <property type="entry name" value="LIGANc"/>
    <property type="match status" value="1"/>
</dbReference>
<dbReference type="FunFam" id="1.10.150.20:FF:000006">
    <property type="entry name" value="DNA ligase"/>
    <property type="match status" value="1"/>
</dbReference>
<dbReference type="FunFam" id="1.10.150.20:FF:000007">
    <property type="entry name" value="DNA ligase"/>
    <property type="match status" value="1"/>
</dbReference>
<dbReference type="FunFam" id="2.40.50.140:FF:000012">
    <property type="entry name" value="DNA ligase"/>
    <property type="match status" value="1"/>
</dbReference>
<dbReference type="FunFam" id="3.30.470.30:FF:000001">
    <property type="entry name" value="DNA ligase"/>
    <property type="match status" value="1"/>
</dbReference>
<dbReference type="Gene3D" id="6.20.10.30">
    <property type="match status" value="1"/>
</dbReference>
<dbReference type="Gene3D" id="1.10.150.20">
    <property type="entry name" value="5' to 3' exonuclease, C-terminal subdomain"/>
    <property type="match status" value="2"/>
</dbReference>
<dbReference type="Gene3D" id="3.40.50.10190">
    <property type="entry name" value="BRCT domain"/>
    <property type="match status" value="1"/>
</dbReference>
<dbReference type="Gene3D" id="3.30.470.30">
    <property type="entry name" value="DNA ligase/mRNA capping enzyme"/>
    <property type="match status" value="1"/>
</dbReference>
<dbReference type="Gene3D" id="1.10.287.610">
    <property type="entry name" value="Helix hairpin bin"/>
    <property type="match status" value="1"/>
</dbReference>
<dbReference type="Gene3D" id="2.40.50.140">
    <property type="entry name" value="Nucleic acid-binding proteins"/>
    <property type="match status" value="1"/>
</dbReference>
<dbReference type="HAMAP" id="MF_01588">
    <property type="entry name" value="DNA_ligase_A"/>
    <property type="match status" value="1"/>
</dbReference>
<dbReference type="InterPro" id="IPR001357">
    <property type="entry name" value="BRCT_dom"/>
</dbReference>
<dbReference type="InterPro" id="IPR036420">
    <property type="entry name" value="BRCT_dom_sf"/>
</dbReference>
<dbReference type="InterPro" id="IPR041663">
    <property type="entry name" value="DisA/LigA_HHH"/>
</dbReference>
<dbReference type="InterPro" id="IPR001679">
    <property type="entry name" value="DNA_ligase"/>
</dbReference>
<dbReference type="InterPro" id="IPR018239">
    <property type="entry name" value="DNA_ligase_AS"/>
</dbReference>
<dbReference type="InterPro" id="IPR033136">
    <property type="entry name" value="DNA_ligase_CS"/>
</dbReference>
<dbReference type="InterPro" id="IPR013839">
    <property type="entry name" value="DNAligase_adenylation"/>
</dbReference>
<dbReference type="InterPro" id="IPR013840">
    <property type="entry name" value="DNAligase_N"/>
</dbReference>
<dbReference type="InterPro" id="IPR012340">
    <property type="entry name" value="NA-bd_OB-fold"/>
</dbReference>
<dbReference type="InterPro" id="IPR004150">
    <property type="entry name" value="NAD_DNA_ligase_OB"/>
</dbReference>
<dbReference type="InterPro" id="IPR010994">
    <property type="entry name" value="RuvA_2-like"/>
</dbReference>
<dbReference type="InterPro" id="IPR004149">
    <property type="entry name" value="Znf_DNAligase_C4"/>
</dbReference>
<dbReference type="NCBIfam" id="TIGR00575">
    <property type="entry name" value="dnlj"/>
    <property type="match status" value="1"/>
</dbReference>
<dbReference type="NCBIfam" id="NF005932">
    <property type="entry name" value="PRK07956.1"/>
    <property type="match status" value="1"/>
</dbReference>
<dbReference type="PANTHER" id="PTHR23389">
    <property type="entry name" value="CHROMOSOME TRANSMISSION FIDELITY FACTOR 18"/>
    <property type="match status" value="1"/>
</dbReference>
<dbReference type="PANTHER" id="PTHR23389:SF9">
    <property type="entry name" value="DNA LIGASE"/>
    <property type="match status" value="1"/>
</dbReference>
<dbReference type="Pfam" id="PF00533">
    <property type="entry name" value="BRCT"/>
    <property type="match status" value="1"/>
</dbReference>
<dbReference type="Pfam" id="PF01653">
    <property type="entry name" value="DNA_ligase_aden"/>
    <property type="match status" value="1"/>
</dbReference>
<dbReference type="Pfam" id="PF03120">
    <property type="entry name" value="DNA_ligase_OB"/>
    <property type="match status" value="1"/>
</dbReference>
<dbReference type="Pfam" id="PF03119">
    <property type="entry name" value="DNA_ligase_ZBD"/>
    <property type="match status" value="1"/>
</dbReference>
<dbReference type="Pfam" id="PF12826">
    <property type="entry name" value="HHH_2"/>
    <property type="match status" value="1"/>
</dbReference>
<dbReference type="Pfam" id="PF14520">
    <property type="entry name" value="HHH_5"/>
    <property type="match status" value="1"/>
</dbReference>
<dbReference type="PIRSF" id="PIRSF001604">
    <property type="entry name" value="LigA"/>
    <property type="match status" value="1"/>
</dbReference>
<dbReference type="SMART" id="SM00292">
    <property type="entry name" value="BRCT"/>
    <property type="match status" value="1"/>
</dbReference>
<dbReference type="SMART" id="SM00532">
    <property type="entry name" value="LIGANc"/>
    <property type="match status" value="1"/>
</dbReference>
<dbReference type="SUPFAM" id="SSF52113">
    <property type="entry name" value="BRCT domain"/>
    <property type="match status" value="1"/>
</dbReference>
<dbReference type="SUPFAM" id="SSF56091">
    <property type="entry name" value="DNA ligase/mRNA capping enzyme, catalytic domain"/>
    <property type="match status" value="1"/>
</dbReference>
<dbReference type="SUPFAM" id="SSF50249">
    <property type="entry name" value="Nucleic acid-binding proteins"/>
    <property type="match status" value="1"/>
</dbReference>
<dbReference type="SUPFAM" id="SSF47781">
    <property type="entry name" value="RuvA domain 2-like"/>
    <property type="match status" value="1"/>
</dbReference>
<dbReference type="PROSITE" id="PS50172">
    <property type="entry name" value="BRCT"/>
    <property type="match status" value="1"/>
</dbReference>
<dbReference type="PROSITE" id="PS01055">
    <property type="entry name" value="DNA_LIGASE_N1"/>
    <property type="match status" value="1"/>
</dbReference>
<dbReference type="PROSITE" id="PS01056">
    <property type="entry name" value="DNA_LIGASE_N2"/>
    <property type="match status" value="1"/>
</dbReference>
<keyword id="KW-0227">DNA damage</keyword>
<keyword id="KW-0234">DNA repair</keyword>
<keyword id="KW-0235">DNA replication</keyword>
<keyword id="KW-0436">Ligase</keyword>
<keyword id="KW-0460">Magnesium</keyword>
<keyword id="KW-0464">Manganese</keyword>
<keyword id="KW-0479">Metal-binding</keyword>
<keyword id="KW-0520">NAD</keyword>
<keyword id="KW-1185">Reference proteome</keyword>
<keyword id="KW-0862">Zinc</keyword>
<organism>
    <name type="scientific">Latilactobacillus sakei subsp. sakei (strain 23K)</name>
    <name type="common">Lactobacillus sakei subsp. sakei</name>
    <dbReference type="NCBI Taxonomy" id="314315"/>
    <lineage>
        <taxon>Bacteria</taxon>
        <taxon>Bacillati</taxon>
        <taxon>Bacillota</taxon>
        <taxon>Bacilli</taxon>
        <taxon>Lactobacillales</taxon>
        <taxon>Lactobacillaceae</taxon>
        <taxon>Latilactobacillus</taxon>
    </lineage>
</organism>
<name>DNLJ_LATSS</name>
<feature type="chain" id="PRO_0000313279" description="DNA ligase">
    <location>
        <begin position="1"/>
        <end position="677"/>
    </location>
</feature>
<feature type="domain" description="BRCT" evidence="1">
    <location>
        <begin position="599"/>
        <end position="677"/>
    </location>
</feature>
<feature type="active site" description="N6-AMP-lysine intermediate" evidence="1">
    <location>
        <position position="124"/>
    </location>
</feature>
<feature type="binding site" evidence="1">
    <location>
        <begin position="43"/>
        <end position="47"/>
    </location>
    <ligand>
        <name>NAD(+)</name>
        <dbReference type="ChEBI" id="CHEBI:57540"/>
    </ligand>
</feature>
<feature type="binding site" evidence="1">
    <location>
        <begin position="92"/>
        <end position="93"/>
    </location>
    <ligand>
        <name>NAD(+)</name>
        <dbReference type="ChEBI" id="CHEBI:57540"/>
    </ligand>
</feature>
<feature type="binding site" evidence="1">
    <location>
        <position position="122"/>
    </location>
    <ligand>
        <name>NAD(+)</name>
        <dbReference type="ChEBI" id="CHEBI:57540"/>
    </ligand>
</feature>
<feature type="binding site" evidence="1">
    <location>
        <position position="145"/>
    </location>
    <ligand>
        <name>NAD(+)</name>
        <dbReference type="ChEBI" id="CHEBI:57540"/>
    </ligand>
</feature>
<feature type="binding site" evidence="1">
    <location>
        <position position="179"/>
    </location>
    <ligand>
        <name>NAD(+)</name>
        <dbReference type="ChEBI" id="CHEBI:57540"/>
    </ligand>
</feature>
<feature type="binding site" evidence="1">
    <location>
        <position position="295"/>
    </location>
    <ligand>
        <name>NAD(+)</name>
        <dbReference type="ChEBI" id="CHEBI:57540"/>
    </ligand>
</feature>
<feature type="binding site" evidence="1">
    <location>
        <position position="319"/>
    </location>
    <ligand>
        <name>NAD(+)</name>
        <dbReference type="ChEBI" id="CHEBI:57540"/>
    </ligand>
</feature>
<feature type="binding site" evidence="1">
    <location>
        <position position="413"/>
    </location>
    <ligand>
        <name>Zn(2+)</name>
        <dbReference type="ChEBI" id="CHEBI:29105"/>
    </ligand>
</feature>
<feature type="binding site" evidence="1">
    <location>
        <position position="416"/>
    </location>
    <ligand>
        <name>Zn(2+)</name>
        <dbReference type="ChEBI" id="CHEBI:29105"/>
    </ligand>
</feature>
<feature type="binding site" evidence="1">
    <location>
        <position position="431"/>
    </location>
    <ligand>
        <name>Zn(2+)</name>
        <dbReference type="ChEBI" id="CHEBI:29105"/>
    </ligand>
</feature>
<feature type="binding site" evidence="1">
    <location>
        <position position="436"/>
    </location>
    <ligand>
        <name>Zn(2+)</name>
        <dbReference type="ChEBI" id="CHEBI:29105"/>
    </ligand>
</feature>
<proteinExistence type="inferred from homology"/>
<accession>Q38VC5</accession>
<protein>
    <recommendedName>
        <fullName evidence="1">DNA ligase</fullName>
        <ecNumber evidence="1">6.5.1.2</ecNumber>
    </recommendedName>
    <alternativeName>
        <fullName evidence="1">Polydeoxyribonucleotide synthase [NAD(+)]</fullName>
    </alternativeName>
</protein>